<protein>
    <recommendedName>
        <fullName>Vasopressin-neurophysin 2-copeptin</fullName>
    </recommendedName>
    <alternativeName>
        <fullName>AVP-NPII</fullName>
    </alternativeName>
    <component>
        <recommendedName>
            <fullName>Arg-vasopressin</fullName>
        </recommendedName>
        <alternativeName>
            <fullName>Arginine-vasopressin</fullName>
        </alternativeName>
    </component>
    <component>
        <recommendedName>
            <fullName>Neurophysin 2</fullName>
        </recommendedName>
        <alternativeName>
            <fullName>Neurophysin-I</fullName>
        </alternativeName>
    </component>
    <component>
        <recommendedName>
            <fullName>Copeptin</fullName>
        </recommendedName>
    </component>
</protein>
<feature type="signal peptide" evidence="1">
    <location>
        <begin position="1"/>
        <end position="23"/>
    </location>
</feature>
<feature type="peptide" id="PRO_0000020518" description="Arg-vasopressin">
    <location>
        <begin position="24"/>
        <end position="32"/>
    </location>
</feature>
<feature type="chain" id="PRO_0000020519" description="Neurophysin 2">
    <location>
        <begin position="36"/>
        <end position="128"/>
    </location>
</feature>
<feature type="peptide" id="PRO_0000020520" description="Copeptin">
    <location>
        <begin position="130"/>
        <end position="168"/>
    </location>
</feature>
<feature type="site" description="Important for agonist activity on V1aR/AVPR1A" evidence="3">
    <location>
        <position position="32"/>
    </location>
</feature>
<feature type="modified residue" description="Glycine amide" evidence="3">
    <location>
        <position position="32"/>
    </location>
</feature>
<feature type="glycosylation site" description="N-linked (GlcNAc...) asparagine" evidence="4">
    <location>
        <position position="135"/>
    </location>
</feature>
<feature type="disulfide bond" evidence="2">
    <location>
        <begin position="24"/>
        <end position="29"/>
    </location>
</feature>
<feature type="disulfide bond" evidence="2">
    <location>
        <begin position="45"/>
        <end position="89"/>
    </location>
</feature>
<feature type="disulfide bond" evidence="2">
    <location>
        <begin position="48"/>
        <end position="62"/>
    </location>
</feature>
<feature type="disulfide bond" evidence="2">
    <location>
        <begin position="56"/>
        <end position="79"/>
    </location>
</feature>
<feature type="disulfide bond" evidence="2">
    <location>
        <begin position="63"/>
        <end position="69"/>
    </location>
</feature>
<feature type="disulfide bond" evidence="2">
    <location>
        <begin position="96"/>
        <end position="108"/>
    </location>
</feature>
<feature type="disulfide bond" evidence="2">
    <location>
        <begin position="102"/>
        <end position="120"/>
    </location>
</feature>
<feature type="disulfide bond" evidence="2">
    <location>
        <begin position="109"/>
        <end position="114"/>
    </location>
</feature>
<accession>P35455</accession>
<proteinExistence type="evidence at transcript level"/>
<organism>
    <name type="scientific">Mus musculus</name>
    <name type="common">Mouse</name>
    <dbReference type="NCBI Taxonomy" id="10090"/>
    <lineage>
        <taxon>Eukaryota</taxon>
        <taxon>Metazoa</taxon>
        <taxon>Chordata</taxon>
        <taxon>Craniata</taxon>
        <taxon>Vertebrata</taxon>
        <taxon>Euteleostomi</taxon>
        <taxon>Mammalia</taxon>
        <taxon>Eutheria</taxon>
        <taxon>Euarchontoglires</taxon>
        <taxon>Glires</taxon>
        <taxon>Rodentia</taxon>
        <taxon>Myomorpha</taxon>
        <taxon>Muroidea</taxon>
        <taxon>Muridae</taxon>
        <taxon>Murinae</taxon>
        <taxon>Mus</taxon>
        <taxon>Mus</taxon>
    </lineage>
</organism>
<dbReference type="EMBL" id="M88354">
    <property type="protein sequence ID" value="AAC42027.1"/>
    <property type="molecule type" value="Genomic_DNA"/>
</dbReference>
<dbReference type="EMBL" id="BC051997">
    <property type="protein sequence ID" value="AAH51997.1"/>
    <property type="molecule type" value="mRNA"/>
</dbReference>
<dbReference type="CCDS" id="CCDS16746.1"/>
<dbReference type="PIR" id="B43755">
    <property type="entry name" value="B43755"/>
</dbReference>
<dbReference type="RefSeq" id="NP_033862.1">
    <property type="nucleotide sequence ID" value="NM_009732.2"/>
</dbReference>
<dbReference type="SMR" id="P35455"/>
<dbReference type="FunCoup" id="P35455">
    <property type="interactions" value="536"/>
</dbReference>
<dbReference type="STRING" id="10090.ENSMUSP00000035551"/>
<dbReference type="GlyConnect" id="2816">
    <property type="glycosylation" value="3 N-Linked glycans (1 site)"/>
</dbReference>
<dbReference type="GlyCosmos" id="P35455">
    <property type="glycosylation" value="1 site, 3 glycans"/>
</dbReference>
<dbReference type="GlyGen" id="P35455">
    <property type="glycosylation" value="1 site, 4 N-linked glycans (1 site)"/>
</dbReference>
<dbReference type="iPTMnet" id="P35455"/>
<dbReference type="PhosphoSitePlus" id="P35455"/>
<dbReference type="CPTAC" id="non-CPTAC-3931"/>
<dbReference type="PaxDb" id="10090-ENSMUSP00000035551"/>
<dbReference type="PeptideAtlas" id="P35455"/>
<dbReference type="ProteomicsDB" id="287383"/>
<dbReference type="Antibodypedia" id="7264">
    <property type="antibodies" value="305 antibodies from 31 providers"/>
</dbReference>
<dbReference type="Ensembl" id="ENSMUST00000046001.7">
    <property type="protein sequence ID" value="ENSMUSP00000035551.7"/>
    <property type="gene ID" value="ENSMUSG00000037727.7"/>
</dbReference>
<dbReference type="GeneID" id="11998"/>
<dbReference type="KEGG" id="mmu:11998"/>
<dbReference type="UCSC" id="uc008mjh.1">
    <property type="organism name" value="mouse"/>
</dbReference>
<dbReference type="AGR" id="MGI:88121"/>
<dbReference type="CTD" id="551"/>
<dbReference type="MGI" id="MGI:88121">
    <property type="gene designation" value="Avp"/>
</dbReference>
<dbReference type="VEuPathDB" id="HostDB:ENSMUSG00000037727"/>
<dbReference type="eggNOG" id="ENOG502S21K">
    <property type="taxonomic scope" value="Eukaryota"/>
</dbReference>
<dbReference type="GeneTree" id="ENSGT00390000004511"/>
<dbReference type="HOGENOM" id="CLU_125770_0_0_1"/>
<dbReference type="InParanoid" id="P35455"/>
<dbReference type="OMA" id="MEPACRE"/>
<dbReference type="OrthoDB" id="10056056at2759"/>
<dbReference type="PhylomeDB" id="P35455"/>
<dbReference type="TreeFam" id="TF333018"/>
<dbReference type="Reactome" id="R-MMU-388479">
    <property type="pathway name" value="Vasopressin-like receptors"/>
</dbReference>
<dbReference type="Reactome" id="R-MMU-416476">
    <property type="pathway name" value="G alpha (q) signalling events"/>
</dbReference>
<dbReference type="Reactome" id="R-MMU-418555">
    <property type="pathway name" value="G alpha (s) signalling events"/>
</dbReference>
<dbReference type="Reactome" id="R-MMU-432040">
    <property type="pathway name" value="Vasopressin regulates renal water homeostasis via Aquaporins"/>
</dbReference>
<dbReference type="Reactome" id="R-MMU-879518">
    <property type="pathway name" value="Transport of organic anions"/>
</dbReference>
<dbReference type="Reactome" id="R-MMU-8856825">
    <property type="pathway name" value="Cargo recognition for clathrin-mediated endocytosis"/>
</dbReference>
<dbReference type="Reactome" id="R-MMU-8856828">
    <property type="pathway name" value="Clathrin-mediated endocytosis"/>
</dbReference>
<dbReference type="BioGRID-ORCS" id="11998">
    <property type="hits" value="3 hits in 77 CRISPR screens"/>
</dbReference>
<dbReference type="ChiTaRS" id="Avp">
    <property type="organism name" value="mouse"/>
</dbReference>
<dbReference type="PRO" id="PR:P35455"/>
<dbReference type="Proteomes" id="UP000000589">
    <property type="component" value="Chromosome 2"/>
</dbReference>
<dbReference type="RNAct" id="P35455">
    <property type="molecule type" value="protein"/>
</dbReference>
<dbReference type="Bgee" id="ENSMUSG00000037727">
    <property type="expression patterns" value="Expressed in paraventricular nucleus of hypothalamus and 59 other cell types or tissues"/>
</dbReference>
<dbReference type="ExpressionAtlas" id="P35455">
    <property type="expression patterns" value="baseline and differential"/>
</dbReference>
<dbReference type="GO" id="GO:0030425">
    <property type="term" value="C:dendrite"/>
    <property type="evidence" value="ECO:0007669"/>
    <property type="project" value="Ensembl"/>
</dbReference>
<dbReference type="GO" id="GO:0005576">
    <property type="term" value="C:extracellular region"/>
    <property type="evidence" value="ECO:0000304"/>
    <property type="project" value="Reactome"/>
</dbReference>
<dbReference type="GO" id="GO:0005615">
    <property type="term" value="C:extracellular space"/>
    <property type="evidence" value="ECO:0007669"/>
    <property type="project" value="Ensembl"/>
</dbReference>
<dbReference type="GO" id="GO:0098992">
    <property type="term" value="C:neuronal dense core vesicle"/>
    <property type="evidence" value="ECO:0007669"/>
    <property type="project" value="Ensembl"/>
</dbReference>
<dbReference type="GO" id="GO:0005185">
    <property type="term" value="F:neurohypophyseal hormone activity"/>
    <property type="evidence" value="ECO:0007669"/>
    <property type="project" value="InterPro"/>
</dbReference>
<dbReference type="GO" id="GO:0004672">
    <property type="term" value="F:protein kinase activity"/>
    <property type="evidence" value="ECO:0007669"/>
    <property type="project" value="Ensembl"/>
</dbReference>
<dbReference type="GO" id="GO:0031894">
    <property type="term" value="F:V1A vasopressin receptor binding"/>
    <property type="evidence" value="ECO:0007669"/>
    <property type="project" value="Ensembl"/>
</dbReference>
<dbReference type="GO" id="GO:0031895">
    <property type="term" value="F:V1B vasopressin receptor binding"/>
    <property type="evidence" value="ECO:0007669"/>
    <property type="project" value="Ensembl"/>
</dbReference>
<dbReference type="GO" id="GO:0007625">
    <property type="term" value="P:grooming behavior"/>
    <property type="evidence" value="ECO:0007669"/>
    <property type="project" value="Ensembl"/>
</dbReference>
<dbReference type="GO" id="GO:0035556">
    <property type="term" value="P:intracellular signal transduction"/>
    <property type="evidence" value="ECO:0007669"/>
    <property type="project" value="Ensembl"/>
</dbReference>
<dbReference type="GO" id="GO:0007626">
    <property type="term" value="P:locomotory behavior"/>
    <property type="evidence" value="ECO:0007669"/>
    <property type="project" value="Ensembl"/>
</dbReference>
<dbReference type="GO" id="GO:0002125">
    <property type="term" value="P:maternal aggressive behavior"/>
    <property type="evidence" value="ECO:0007669"/>
    <property type="project" value="Ensembl"/>
</dbReference>
<dbReference type="GO" id="GO:0042711">
    <property type="term" value="P:maternal behavior"/>
    <property type="evidence" value="ECO:0007669"/>
    <property type="project" value="Ensembl"/>
</dbReference>
<dbReference type="GO" id="GO:0050891">
    <property type="term" value="P:multicellular organismal-level water homeostasis"/>
    <property type="evidence" value="ECO:0007669"/>
    <property type="project" value="Ensembl"/>
</dbReference>
<dbReference type="GO" id="GO:0043066">
    <property type="term" value="P:negative regulation of apoptotic process"/>
    <property type="evidence" value="ECO:0007669"/>
    <property type="project" value="Ensembl"/>
</dbReference>
<dbReference type="GO" id="GO:0007621">
    <property type="term" value="P:negative regulation of female receptivity"/>
    <property type="evidence" value="ECO:0007669"/>
    <property type="project" value="Ensembl"/>
</dbReference>
<dbReference type="GO" id="GO:0051970">
    <property type="term" value="P:negative regulation of transmission of nerve impulse"/>
    <property type="evidence" value="ECO:0007669"/>
    <property type="project" value="Ensembl"/>
</dbReference>
<dbReference type="GO" id="GO:0030307">
    <property type="term" value="P:positive regulation of cell growth"/>
    <property type="evidence" value="ECO:0007669"/>
    <property type="project" value="Ensembl"/>
</dbReference>
<dbReference type="GO" id="GO:0008284">
    <property type="term" value="P:positive regulation of cell population proliferation"/>
    <property type="evidence" value="ECO:0007669"/>
    <property type="project" value="Ensembl"/>
</dbReference>
<dbReference type="GO" id="GO:0032849">
    <property type="term" value="P:positive regulation of cellular pH reduction"/>
    <property type="evidence" value="ECO:0007669"/>
    <property type="project" value="Ensembl"/>
</dbReference>
<dbReference type="GO" id="GO:0007204">
    <property type="term" value="P:positive regulation of cytosolic calcium ion concentration"/>
    <property type="evidence" value="ECO:0007669"/>
    <property type="project" value="Ensembl"/>
</dbReference>
<dbReference type="GO" id="GO:0010628">
    <property type="term" value="P:positive regulation of gene expression"/>
    <property type="evidence" value="ECO:0007669"/>
    <property type="project" value="Ensembl"/>
</dbReference>
<dbReference type="GO" id="GO:0014049">
    <property type="term" value="P:positive regulation of glutamate secretion"/>
    <property type="evidence" value="ECO:0007669"/>
    <property type="project" value="Ensembl"/>
</dbReference>
<dbReference type="GO" id="GO:0031394">
    <property type="term" value="P:positive regulation of prostaglandin biosynthetic process"/>
    <property type="evidence" value="ECO:0007669"/>
    <property type="project" value="Ensembl"/>
</dbReference>
<dbReference type="GO" id="GO:0003084">
    <property type="term" value="P:positive regulation of systemic arterial blood pressure"/>
    <property type="evidence" value="ECO:0007669"/>
    <property type="project" value="Ensembl"/>
</dbReference>
<dbReference type="GO" id="GO:0045907">
    <property type="term" value="P:positive regulation of vasoconstriction"/>
    <property type="evidence" value="ECO:0007669"/>
    <property type="project" value="Ensembl"/>
</dbReference>
<dbReference type="GO" id="GO:0045471">
    <property type="term" value="P:response to ethanol"/>
    <property type="evidence" value="ECO:0007669"/>
    <property type="project" value="Ensembl"/>
</dbReference>
<dbReference type="GO" id="GO:0035094">
    <property type="term" value="P:response to nicotine"/>
    <property type="evidence" value="ECO:0007669"/>
    <property type="project" value="Ensembl"/>
</dbReference>
<dbReference type="GO" id="GO:0033574">
    <property type="term" value="P:response to testosterone"/>
    <property type="evidence" value="ECO:0007669"/>
    <property type="project" value="Ensembl"/>
</dbReference>
<dbReference type="GO" id="GO:0035176">
    <property type="term" value="P:social behavior"/>
    <property type="evidence" value="ECO:0007669"/>
    <property type="project" value="Ensembl"/>
</dbReference>
<dbReference type="GO" id="GO:0046718">
    <property type="term" value="P:symbiont entry into host cell"/>
    <property type="evidence" value="ECO:0007669"/>
    <property type="project" value="Ensembl"/>
</dbReference>
<dbReference type="GO" id="GO:0042310">
    <property type="term" value="P:vasoconstriction"/>
    <property type="evidence" value="ECO:0007669"/>
    <property type="project" value="UniProtKB-KW"/>
</dbReference>
<dbReference type="FunFam" id="2.60.9.10:FF:000001">
    <property type="entry name" value="oxytocin-neurophysin 1"/>
    <property type="match status" value="1"/>
</dbReference>
<dbReference type="Gene3D" id="2.60.9.10">
    <property type="entry name" value="Neurohypophysial hormone domain"/>
    <property type="match status" value="1"/>
</dbReference>
<dbReference type="InterPro" id="IPR000981">
    <property type="entry name" value="Neurhyp_horm"/>
</dbReference>
<dbReference type="InterPro" id="IPR036387">
    <property type="entry name" value="Neurhyp_horm_dom_sf"/>
</dbReference>
<dbReference type="InterPro" id="IPR022423">
    <property type="entry name" value="Neurohypophysial_hormone_CS"/>
</dbReference>
<dbReference type="PANTHER" id="PTHR11681">
    <property type="entry name" value="NEUROPHYSIN"/>
    <property type="match status" value="1"/>
</dbReference>
<dbReference type="PANTHER" id="PTHR11681:SF9">
    <property type="entry name" value="VASOPRESSIN-NEUROPHYSIN 2-COPEPTIN"/>
    <property type="match status" value="1"/>
</dbReference>
<dbReference type="Pfam" id="PF00220">
    <property type="entry name" value="Hormone_4"/>
    <property type="match status" value="1"/>
</dbReference>
<dbReference type="Pfam" id="PF00184">
    <property type="entry name" value="Hormone_5"/>
    <property type="match status" value="1"/>
</dbReference>
<dbReference type="PIRSF" id="PIRSF001815">
    <property type="entry name" value="Nonapeptide_hormone_precursor"/>
    <property type="match status" value="1"/>
</dbReference>
<dbReference type="PRINTS" id="PR00831">
    <property type="entry name" value="NEUROPHYSIN"/>
</dbReference>
<dbReference type="SMART" id="SM00003">
    <property type="entry name" value="NH"/>
    <property type="match status" value="1"/>
</dbReference>
<dbReference type="SUPFAM" id="SSF49606">
    <property type="entry name" value="Neurophysin II"/>
    <property type="match status" value="1"/>
</dbReference>
<dbReference type="PROSITE" id="PS00264">
    <property type="entry name" value="NEUROHYPOPHYS_HORM"/>
    <property type="match status" value="1"/>
</dbReference>
<reference key="1">
    <citation type="journal article" date="1990" name="Brain Res. Mol. Brain Res.">
        <title>Structure of mouse vasopressin and oxytocin genes.</title>
        <authorList>
            <person name="Hara Y."/>
            <person name="Battey J."/>
            <person name="Gainer H."/>
        </authorList>
    </citation>
    <scope>NUCLEOTIDE SEQUENCE</scope>
</reference>
<reference key="2">
    <citation type="journal article" date="2004" name="Genome Res.">
        <title>The status, quality, and expansion of the NIH full-length cDNA project: the Mammalian Gene Collection (MGC).</title>
        <authorList>
            <consortium name="The MGC Project Team"/>
        </authorList>
    </citation>
    <scope>NUCLEOTIDE SEQUENCE [LARGE SCALE MRNA]</scope>
    <source>
        <strain>C57BL/6J</strain>
        <tissue>Brain</tissue>
    </source>
</reference>
<comment type="function">
    <text>Neurophysin 2 specifically binds vasopressin.</text>
</comment>
<comment type="function">
    <text evidence="3">Vasopressin has a direct antidiuretic action on the kidney, it also causes vasoconstriction of the peripheral vessels. Acts by binding to vasopressin receptors (V1bR/AVPR1B, V1aR/AVPR1A, and V2R/AVPR2) (By similarity).</text>
</comment>
<comment type="subunit">
    <text evidence="3">Interacts with vasopressin receptors V1bR/AVPR1B (Ki=85 pM), V1aR/AVPR1A (Ki=0.6 nM) and V2R/AVPR2 (Ki=4.9 nM) (By similarity). Interacts with oxytocin receptor (OXTR) (Ki=110 nM) (By similarity).</text>
</comment>
<comment type="subcellular location">
    <subcellularLocation>
        <location>Secreted</location>
    </subcellularLocation>
</comment>
<comment type="similarity">
    <text evidence="5">Belongs to the vasopressin/oxytocin family.</text>
</comment>
<sequence>MLARMLNTTLSACFLSLLAFSSACYFQNCPRGGKRAISDMELRQCLPCGPGGKGRCFGPSICCADELGCFVGTAEALRCQEENYLPSPCQSGQKPCGSGGRCAAVGICCSDESCVAEPECHDGFFRLTRAREPSNATQLDGPARALLLRLVQLAGTRESVDSAKPRVY</sequence>
<evidence type="ECO:0000250" key="1"/>
<evidence type="ECO:0000250" key="2">
    <source>
        <dbReference type="UniProtKB" id="P01175"/>
    </source>
</evidence>
<evidence type="ECO:0000250" key="3">
    <source>
        <dbReference type="UniProtKB" id="P01185"/>
    </source>
</evidence>
<evidence type="ECO:0000255" key="4"/>
<evidence type="ECO:0000305" key="5"/>
<keyword id="KW-0027">Amidation</keyword>
<keyword id="KW-0165">Cleavage on pair of basic residues</keyword>
<keyword id="KW-1015">Disulfide bond</keyword>
<keyword id="KW-0325">Glycoprotein</keyword>
<keyword id="KW-0372">Hormone</keyword>
<keyword id="KW-1185">Reference proteome</keyword>
<keyword id="KW-0964">Secreted</keyword>
<keyword id="KW-0732">Signal</keyword>
<keyword id="KW-0838">Vasoactive</keyword>
<keyword id="KW-0839">Vasoconstrictor</keyword>
<gene>
    <name type="primary">Avp</name>
</gene>
<name>NEU2_MOUSE</name>